<name>RL33_RHOPA</name>
<reference key="1">
    <citation type="journal article" date="2004" name="Nat. Biotechnol.">
        <title>Complete genome sequence of the metabolically versatile photosynthetic bacterium Rhodopseudomonas palustris.</title>
        <authorList>
            <person name="Larimer F.W."/>
            <person name="Chain P."/>
            <person name="Hauser L."/>
            <person name="Lamerdin J.E."/>
            <person name="Malfatti S."/>
            <person name="Do L."/>
            <person name="Land M.L."/>
            <person name="Pelletier D.A."/>
            <person name="Beatty J.T."/>
            <person name="Lang A.S."/>
            <person name="Tabita F.R."/>
            <person name="Gibson J.L."/>
            <person name="Hanson T.E."/>
            <person name="Bobst C."/>
            <person name="Torres y Torres J.L."/>
            <person name="Peres C."/>
            <person name="Harrison F.H."/>
            <person name="Gibson J."/>
            <person name="Harwood C.S."/>
        </authorList>
    </citation>
    <scope>NUCLEOTIDE SEQUENCE [LARGE SCALE GENOMIC DNA]</scope>
    <source>
        <strain>ATCC BAA-98 / CGA009</strain>
    </source>
</reference>
<reference key="2">
    <citation type="journal article" date="2004" name="J. Proteome Res.">
        <title>Characterization of the 70S ribosome from Rhodopseudomonas palustris using an integrated 'top-down' and 'bottom-up' mass spectrometric approach.</title>
        <authorList>
            <person name="Strader M.B."/>
            <person name="VerBerkmoes N.C."/>
            <person name="Tabb D.L."/>
            <person name="Connelly H.M."/>
            <person name="Barton J.W."/>
            <person name="Bruce B.D."/>
            <person name="Pelletier D.A."/>
            <person name="Davison B.H."/>
            <person name="Hettich R.L."/>
            <person name="Larimer F.W."/>
            <person name="Hurst G.B."/>
        </authorList>
    </citation>
    <scope>PROTEIN SEQUENCE OF 2-10</scope>
    <scope>MASS SPECTROMETRY</scope>
    <source>
        <strain>ATCC BAA-98 / CGA009</strain>
    </source>
</reference>
<keyword id="KW-0903">Direct protein sequencing</keyword>
<keyword id="KW-0488">Methylation</keyword>
<keyword id="KW-0687">Ribonucleoprotein</keyword>
<keyword id="KW-0689">Ribosomal protein</keyword>
<sequence>MAKAVTIKIKLVSTADTGFYYVTKKNSRTMTDKMVKKKYDPVARKHVEFKEAKIK</sequence>
<dbReference type="EMBL" id="BX572603">
    <property type="protein sequence ID" value="CAE28570.1"/>
    <property type="molecule type" value="Genomic_DNA"/>
</dbReference>
<dbReference type="RefSeq" id="WP_011158674.1">
    <property type="nucleotide sequence ID" value="NZ_CP116810.1"/>
</dbReference>
<dbReference type="SMR" id="Q6N554"/>
<dbReference type="IntAct" id="Q6N554">
    <property type="interactions" value="1"/>
</dbReference>
<dbReference type="STRING" id="258594.RPA3129"/>
<dbReference type="GeneID" id="66894211"/>
<dbReference type="eggNOG" id="COG0267">
    <property type="taxonomic scope" value="Bacteria"/>
</dbReference>
<dbReference type="HOGENOM" id="CLU_190949_1_1_5"/>
<dbReference type="PhylomeDB" id="Q6N554"/>
<dbReference type="GO" id="GO:0022625">
    <property type="term" value="C:cytosolic large ribosomal subunit"/>
    <property type="evidence" value="ECO:0007669"/>
    <property type="project" value="TreeGrafter"/>
</dbReference>
<dbReference type="GO" id="GO:0003735">
    <property type="term" value="F:structural constituent of ribosome"/>
    <property type="evidence" value="ECO:0007669"/>
    <property type="project" value="InterPro"/>
</dbReference>
<dbReference type="GO" id="GO:0006412">
    <property type="term" value="P:translation"/>
    <property type="evidence" value="ECO:0007669"/>
    <property type="project" value="UniProtKB-UniRule"/>
</dbReference>
<dbReference type="FunFam" id="2.20.28.120:FF:000003">
    <property type="entry name" value="50S ribosomal protein L33"/>
    <property type="match status" value="1"/>
</dbReference>
<dbReference type="Gene3D" id="2.20.28.120">
    <property type="entry name" value="Ribosomal protein L33"/>
    <property type="match status" value="1"/>
</dbReference>
<dbReference type="HAMAP" id="MF_00294">
    <property type="entry name" value="Ribosomal_bL33"/>
    <property type="match status" value="1"/>
</dbReference>
<dbReference type="InterPro" id="IPR001705">
    <property type="entry name" value="Ribosomal_bL33"/>
</dbReference>
<dbReference type="InterPro" id="IPR018264">
    <property type="entry name" value="Ribosomal_bL33_CS"/>
</dbReference>
<dbReference type="InterPro" id="IPR038584">
    <property type="entry name" value="Ribosomal_bL33_sf"/>
</dbReference>
<dbReference type="InterPro" id="IPR011332">
    <property type="entry name" value="Ribosomal_zn-bd"/>
</dbReference>
<dbReference type="NCBIfam" id="NF001860">
    <property type="entry name" value="PRK00595.1"/>
    <property type="match status" value="1"/>
</dbReference>
<dbReference type="NCBIfam" id="TIGR01023">
    <property type="entry name" value="rpmG_bact"/>
    <property type="match status" value="1"/>
</dbReference>
<dbReference type="PANTHER" id="PTHR15238">
    <property type="entry name" value="54S RIBOSOMAL PROTEIN L39, MITOCHONDRIAL"/>
    <property type="match status" value="1"/>
</dbReference>
<dbReference type="PANTHER" id="PTHR15238:SF1">
    <property type="entry name" value="LARGE RIBOSOMAL SUBUNIT PROTEIN BL33M"/>
    <property type="match status" value="1"/>
</dbReference>
<dbReference type="Pfam" id="PF00471">
    <property type="entry name" value="Ribosomal_L33"/>
    <property type="match status" value="1"/>
</dbReference>
<dbReference type="SUPFAM" id="SSF57829">
    <property type="entry name" value="Zn-binding ribosomal proteins"/>
    <property type="match status" value="1"/>
</dbReference>
<dbReference type="PROSITE" id="PS00582">
    <property type="entry name" value="RIBOSOMAL_L33"/>
    <property type="match status" value="1"/>
</dbReference>
<proteinExistence type="evidence at protein level"/>
<protein>
    <recommendedName>
        <fullName evidence="1">Large ribosomal subunit protein bL33</fullName>
    </recommendedName>
    <alternativeName>
        <fullName evidence="3">50S ribosomal protein L33</fullName>
    </alternativeName>
    <alternativeName>
        <fullName>RRP-L33</fullName>
    </alternativeName>
</protein>
<accession>Q6N554</accession>
<organism>
    <name type="scientific">Rhodopseudomonas palustris (strain ATCC BAA-98 / CGA009)</name>
    <dbReference type="NCBI Taxonomy" id="258594"/>
    <lineage>
        <taxon>Bacteria</taxon>
        <taxon>Pseudomonadati</taxon>
        <taxon>Pseudomonadota</taxon>
        <taxon>Alphaproteobacteria</taxon>
        <taxon>Hyphomicrobiales</taxon>
        <taxon>Nitrobacteraceae</taxon>
        <taxon>Rhodopseudomonas</taxon>
    </lineage>
</organism>
<gene>
    <name evidence="1" type="primary">rpmG</name>
    <name evidence="1" type="synonym">rpl33</name>
    <name type="ordered locus">RPA3129</name>
</gene>
<evidence type="ECO:0000255" key="1">
    <source>
        <dbReference type="HAMAP-Rule" id="MF_00294"/>
    </source>
</evidence>
<evidence type="ECO:0000269" key="2">
    <source>
    </source>
</evidence>
<evidence type="ECO:0000305" key="3"/>
<comment type="PTM">
    <text>The protein is methylated on either Ala-2 or Lys-3.</text>
</comment>
<comment type="mass spectrometry"/>
<comment type="similarity">
    <text evidence="1">Belongs to the bacterial ribosomal protein bL33 family.</text>
</comment>
<feature type="initiator methionine" description="Removed" evidence="2">
    <location>
        <position position="1"/>
    </location>
</feature>
<feature type="chain" id="PRO_0000224162" description="Large ribosomal subunit protein bL33">
    <location>
        <begin position="2"/>
        <end position="55"/>
    </location>
</feature>